<reference key="1">
    <citation type="journal article" date="2006" name="PLoS Biol.">
        <title>The genome of deep-sea vent chemolithoautotroph Thiomicrospira crunogena XCL-2.</title>
        <authorList>
            <person name="Scott K.M."/>
            <person name="Sievert S.M."/>
            <person name="Abril F.N."/>
            <person name="Ball L.A."/>
            <person name="Barrett C.J."/>
            <person name="Blake R.A."/>
            <person name="Boller A.J."/>
            <person name="Chain P.S.G."/>
            <person name="Clark J.A."/>
            <person name="Davis C.R."/>
            <person name="Detter C."/>
            <person name="Do K.F."/>
            <person name="Dobrinski K.P."/>
            <person name="Faza B.I."/>
            <person name="Fitzpatrick K.A."/>
            <person name="Freyermuth S.K."/>
            <person name="Harmer T.L."/>
            <person name="Hauser L.J."/>
            <person name="Huegler M."/>
            <person name="Kerfeld C.A."/>
            <person name="Klotz M.G."/>
            <person name="Kong W.W."/>
            <person name="Land M."/>
            <person name="Lapidus A."/>
            <person name="Larimer F.W."/>
            <person name="Longo D.L."/>
            <person name="Lucas S."/>
            <person name="Malfatti S.A."/>
            <person name="Massey S.E."/>
            <person name="Martin D.D."/>
            <person name="McCuddin Z."/>
            <person name="Meyer F."/>
            <person name="Moore J.L."/>
            <person name="Ocampo L.H. Jr."/>
            <person name="Paul J.H."/>
            <person name="Paulsen I.T."/>
            <person name="Reep D.K."/>
            <person name="Ren Q."/>
            <person name="Ross R.L."/>
            <person name="Sato P.Y."/>
            <person name="Thomas P."/>
            <person name="Tinkham L.E."/>
            <person name="Zeruth G.T."/>
        </authorList>
    </citation>
    <scope>NUCLEOTIDE SEQUENCE [LARGE SCALE GENOMIC DNA]</scope>
    <source>
        <strain>DSM 25203 / XCL-2</strain>
    </source>
</reference>
<organism>
    <name type="scientific">Hydrogenovibrio crunogenus (strain DSM 25203 / XCL-2)</name>
    <name type="common">Thiomicrospira crunogena</name>
    <dbReference type="NCBI Taxonomy" id="317025"/>
    <lineage>
        <taxon>Bacteria</taxon>
        <taxon>Pseudomonadati</taxon>
        <taxon>Pseudomonadota</taxon>
        <taxon>Gammaproteobacteria</taxon>
        <taxon>Thiotrichales</taxon>
        <taxon>Piscirickettsiaceae</taxon>
        <taxon>Hydrogenovibrio</taxon>
    </lineage>
</organism>
<accession>Q31HC6</accession>
<name>CSOSD_HYDCU</name>
<comment type="function">
    <text evidence="1">Part of the carboxysome shell, a polyhedral inclusion where RuBisCO (ribulose bisphosphate carboxylase, cbbL-cbbS) is sequestered. It may control transport of RuBisCO reactants in and out of the carboxysome.</text>
</comment>
<comment type="subunit">
    <text evidence="1">Homotrimer. Forms a dimer of stacked trimers, the same faces interact. Probably forms a CsoS1-CsoS1D-CsoS2 complex.</text>
</comment>
<comment type="subcellular location">
    <subcellularLocation>
        <location evidence="1">Carboxysome</location>
    </subcellularLocation>
    <text evidence="3">This bacterium makes alpha-type carboxysomes.</text>
</comment>
<comment type="domain">
    <text evidence="1">Contains 2 BMC domains, trimerizes in a staggered manner to give a hexamer; each subunit in one trimer interacts with 2 subunits in the facing trimer. Each stacked hexamer can form a pore of about 14 Angstroms in diameter. Dimerization of the trimers forms a channel-like compartment, accessible via an open pore. This channel may be large enough to accomodate transport of substrates into and out of the carboxysome.</text>
</comment>
<comment type="similarity">
    <text evidence="2">Belongs to the EutL/PduB family.</text>
</comment>
<protein>
    <recommendedName>
        <fullName>Carboxysome shell protein CsoS1D</fullName>
    </recommendedName>
</protein>
<dbReference type="EMBL" id="CP000109">
    <property type="protein sequence ID" value="ABB41447.1"/>
    <property type="molecule type" value="Genomic_DNA"/>
</dbReference>
<dbReference type="SMR" id="Q31HC6"/>
<dbReference type="STRING" id="317025.Tcr_0851"/>
<dbReference type="KEGG" id="tcx:Tcr_0851"/>
<dbReference type="eggNOG" id="COG4577">
    <property type="taxonomic scope" value="Bacteria"/>
</dbReference>
<dbReference type="HOGENOM" id="CLU_091281_0_0_6"/>
<dbReference type="OrthoDB" id="5800762at2"/>
<dbReference type="GO" id="GO:0031470">
    <property type="term" value="C:carboxysome"/>
    <property type="evidence" value="ECO:0007669"/>
    <property type="project" value="UniProtKB-SubCell"/>
</dbReference>
<dbReference type="GO" id="GO:0015977">
    <property type="term" value="P:carbon fixation"/>
    <property type="evidence" value="ECO:0007669"/>
    <property type="project" value="UniProtKB-KW"/>
</dbReference>
<dbReference type="CDD" id="cd07051">
    <property type="entry name" value="BMC_like_1_repeat1"/>
    <property type="match status" value="1"/>
</dbReference>
<dbReference type="CDD" id="cd07052">
    <property type="entry name" value="BMC_like_1_repeat2"/>
    <property type="match status" value="1"/>
</dbReference>
<dbReference type="Gene3D" id="3.30.70.1710">
    <property type="match status" value="2"/>
</dbReference>
<dbReference type="InterPro" id="IPR044870">
    <property type="entry name" value="BMC_CP"/>
</dbReference>
<dbReference type="InterPro" id="IPR000249">
    <property type="entry name" value="BMC_dom"/>
</dbReference>
<dbReference type="InterPro" id="IPR037233">
    <property type="entry name" value="CcmK-like_sf"/>
</dbReference>
<dbReference type="Pfam" id="PF00936">
    <property type="entry name" value="BMC"/>
    <property type="match status" value="1"/>
</dbReference>
<dbReference type="SMART" id="SM00877">
    <property type="entry name" value="BMC"/>
    <property type="match status" value="1"/>
</dbReference>
<dbReference type="SUPFAM" id="SSF143414">
    <property type="entry name" value="CcmK-like"/>
    <property type="match status" value="1"/>
</dbReference>
<dbReference type="PROSITE" id="PS51931">
    <property type="entry name" value="BMC_CP"/>
    <property type="match status" value="2"/>
</dbReference>
<feature type="chain" id="PRO_0000452076" description="Carboxysome shell protein CsoS1D">
    <location>
        <begin position="1"/>
        <end position="205"/>
    </location>
</feature>
<feature type="domain" description="BMC circularly permuted 1" evidence="2">
    <location>
        <begin position="3"/>
        <end position="100"/>
    </location>
</feature>
<feature type="domain" description="BMC circularly permuted 2" evidence="2">
    <location>
        <begin position="106"/>
        <end position="205"/>
    </location>
</feature>
<feature type="short sequence motif" description="Gates the pore" evidence="1">
    <location>
        <begin position="68"/>
        <end position="69"/>
    </location>
</feature>
<keyword id="KW-1283">Bacterial microcompartment</keyword>
<keyword id="KW-0120">Carbon dioxide fixation</keyword>
<keyword id="KW-1282">Carboxysome</keyword>
<keyword id="KW-0677">Repeat</keyword>
<gene>
    <name evidence="3" type="primary">csoS1D</name>
    <name type="ordered locus">Tcr_0851</name>
</gene>
<proteinExistence type="inferred from homology"/>
<sequence>MIELRTYVFLDSLQPQLASYMATASMGFLPVPGDSSLWIEVAPGMAVHRLSDIALKASNVRLGQQIVERAYGSMVIHHRDQSDVLEAGQRILDHLQTREYDRQQCVVMWNEIIRGVTADHATLINRDNRKGSMILPGQSMFIMETEPAGYIIYAANEAEKAADVTLVEARAVGAYGRLVMCGKEGDITEAARAANEALKRLTCRS</sequence>
<evidence type="ECO:0000250" key="1">
    <source>
        <dbReference type="UniProtKB" id="Q7V2D3"/>
    </source>
</evidence>
<evidence type="ECO:0000255" key="2">
    <source>
        <dbReference type="PROSITE-ProRule" id="PRU01279"/>
    </source>
</evidence>
<evidence type="ECO:0000305" key="3"/>